<keyword id="KW-1185">Reference proteome</keyword>
<keyword id="KW-0687">Ribonucleoprotein</keyword>
<keyword id="KW-0689">Ribosomal protein</keyword>
<proteinExistence type="inferred from homology"/>
<dbReference type="EMBL" id="CP001365">
    <property type="protein sequence ID" value="ACM56426.1"/>
    <property type="molecule type" value="Genomic_DNA"/>
</dbReference>
<dbReference type="RefSeq" id="WP_015909578.1">
    <property type="nucleotide sequence ID" value="NC_012029.1"/>
</dbReference>
<dbReference type="SMR" id="B9LUU9"/>
<dbReference type="GeneID" id="7400793"/>
<dbReference type="KEGG" id="hla:Hlac_0827"/>
<dbReference type="eggNOG" id="arCOG04473">
    <property type="taxonomic scope" value="Archaea"/>
</dbReference>
<dbReference type="HOGENOM" id="CLU_112570_3_2_2"/>
<dbReference type="Proteomes" id="UP000000740">
    <property type="component" value="Chromosome 1"/>
</dbReference>
<dbReference type="GO" id="GO:1990904">
    <property type="term" value="C:ribonucleoprotein complex"/>
    <property type="evidence" value="ECO:0007669"/>
    <property type="project" value="UniProtKB-KW"/>
</dbReference>
<dbReference type="GO" id="GO:0005840">
    <property type="term" value="C:ribosome"/>
    <property type="evidence" value="ECO:0007669"/>
    <property type="project" value="UniProtKB-KW"/>
</dbReference>
<dbReference type="GO" id="GO:0003735">
    <property type="term" value="F:structural constituent of ribosome"/>
    <property type="evidence" value="ECO:0007669"/>
    <property type="project" value="InterPro"/>
</dbReference>
<dbReference type="GO" id="GO:0006412">
    <property type="term" value="P:translation"/>
    <property type="evidence" value="ECO:0007669"/>
    <property type="project" value="UniProtKB-UniRule"/>
</dbReference>
<dbReference type="CDD" id="cd00463">
    <property type="entry name" value="Ribosomal_L31e"/>
    <property type="match status" value="1"/>
</dbReference>
<dbReference type="Gene3D" id="3.10.440.10">
    <property type="match status" value="1"/>
</dbReference>
<dbReference type="HAMAP" id="MF_00410">
    <property type="entry name" value="Ribosomal_eL31"/>
    <property type="match status" value="1"/>
</dbReference>
<dbReference type="InterPro" id="IPR000054">
    <property type="entry name" value="Ribosomal_eL31"/>
</dbReference>
<dbReference type="InterPro" id="IPR023621">
    <property type="entry name" value="Ribosomal_eL31_dom_sf"/>
</dbReference>
<dbReference type="NCBIfam" id="NF002258">
    <property type="entry name" value="PRK01192.1-1"/>
    <property type="match status" value="1"/>
</dbReference>
<dbReference type="Pfam" id="PF01198">
    <property type="entry name" value="Ribosomal_L31e"/>
    <property type="match status" value="1"/>
</dbReference>
<dbReference type="SMART" id="SM01380">
    <property type="entry name" value="Ribosomal_L31e"/>
    <property type="match status" value="1"/>
</dbReference>
<dbReference type="SUPFAM" id="SSF54575">
    <property type="entry name" value="Ribosomal protein L31e"/>
    <property type="match status" value="1"/>
</dbReference>
<accession>B9LUU9</accession>
<protein>
    <recommendedName>
        <fullName evidence="1">Large ribosomal subunit protein eL31</fullName>
    </recommendedName>
    <alternativeName>
        <fullName evidence="2">50S ribosomal protein L31e</fullName>
    </alternativeName>
</protein>
<reference key="1">
    <citation type="journal article" date="2016" name="Stand. Genomic Sci.">
        <title>Complete genome sequence of the Antarctic Halorubrum lacusprofundi type strain ACAM 34.</title>
        <authorList>
            <person name="Anderson I.J."/>
            <person name="DasSarma P."/>
            <person name="Lucas S."/>
            <person name="Copeland A."/>
            <person name="Lapidus A."/>
            <person name="Del Rio T.G."/>
            <person name="Tice H."/>
            <person name="Dalin E."/>
            <person name="Bruce D.C."/>
            <person name="Goodwin L."/>
            <person name="Pitluck S."/>
            <person name="Sims D."/>
            <person name="Brettin T.S."/>
            <person name="Detter J.C."/>
            <person name="Han C.S."/>
            <person name="Larimer F."/>
            <person name="Hauser L."/>
            <person name="Land M."/>
            <person name="Ivanova N."/>
            <person name="Richardson P."/>
            <person name="Cavicchioli R."/>
            <person name="DasSarma S."/>
            <person name="Woese C.R."/>
            <person name="Kyrpides N.C."/>
        </authorList>
    </citation>
    <scope>NUCLEOTIDE SEQUENCE [LARGE SCALE GENOMIC DNA]</scope>
    <source>
        <strain>ATCC 49239 / DSM 5036 / JCM 8891 / ACAM 34</strain>
    </source>
</reference>
<feature type="chain" id="PRO_1000134757" description="Large ribosomal subunit protein eL31">
    <location>
        <begin position="1"/>
        <end position="92"/>
    </location>
</feature>
<gene>
    <name evidence="1" type="primary">rpl31e</name>
    <name type="ordered locus">Hlac_0827</name>
</gene>
<sequence length="92" mass="10411">MSTSDFEERVVTVPLRDANDKPIQERADFAMKIVREHLAQHFSVDEAEVVLDTTVNEAVWANGRQNPPSKVRVRAARFVEDGEPVVEAEYAE</sequence>
<evidence type="ECO:0000255" key="1">
    <source>
        <dbReference type="HAMAP-Rule" id="MF_00410"/>
    </source>
</evidence>
<evidence type="ECO:0000305" key="2"/>
<comment type="similarity">
    <text evidence="1">Belongs to the eukaryotic ribosomal protein eL31 family.</text>
</comment>
<organism>
    <name type="scientific">Halorubrum lacusprofundi (strain ATCC 49239 / DSM 5036 / JCM 8891 / ACAM 34)</name>
    <dbReference type="NCBI Taxonomy" id="416348"/>
    <lineage>
        <taxon>Archaea</taxon>
        <taxon>Methanobacteriati</taxon>
        <taxon>Methanobacteriota</taxon>
        <taxon>Stenosarchaea group</taxon>
        <taxon>Halobacteria</taxon>
        <taxon>Halobacteriales</taxon>
        <taxon>Haloferacaceae</taxon>
        <taxon>Halorubrum</taxon>
    </lineage>
</organism>
<name>RL31_HALLT</name>